<protein>
    <recommendedName>
        <fullName evidence="3">Basic phospholipase A2 Pto-N6</fullName>
        <shortName>svPLA2</shortName>
        <ecNumber>3.1.1.4</ecNumber>
    </recommendedName>
    <alternativeName>
        <fullName>Phosphatidylcholine 2-acylhydrolase</fullName>
    </alternativeName>
</protein>
<comment type="function">
    <text evidence="1">Snake venom phospholipase A2 (PLA2) that displays edema-inducing activities, as well as presynaptic neurotoxicity and myotoxicity. PLA2 catalyzes the calcium-dependent hydrolysis of the 2-acyl groups in 3-sn-phosphoglycerides (By similarity).</text>
</comment>
<comment type="catalytic activity">
    <reaction>
        <text>a 1,2-diacyl-sn-glycero-3-phosphocholine + H2O = a 1-acyl-sn-glycero-3-phosphocholine + a fatty acid + H(+)</text>
        <dbReference type="Rhea" id="RHEA:15801"/>
        <dbReference type="ChEBI" id="CHEBI:15377"/>
        <dbReference type="ChEBI" id="CHEBI:15378"/>
        <dbReference type="ChEBI" id="CHEBI:28868"/>
        <dbReference type="ChEBI" id="CHEBI:57643"/>
        <dbReference type="ChEBI" id="CHEBI:58168"/>
        <dbReference type="EC" id="3.1.1.4"/>
    </reaction>
</comment>
<comment type="cofactor">
    <cofactor evidence="1">
        <name>Ca(2+)</name>
        <dbReference type="ChEBI" id="CHEBI:29108"/>
    </cofactor>
    <text evidence="1">Binds 1 Ca(2+) ion.</text>
</comment>
<comment type="subcellular location">
    <subcellularLocation>
        <location evidence="2">Secreted</location>
    </subcellularLocation>
</comment>
<comment type="tissue specificity">
    <text evidence="5">Expressed by the venom gland.</text>
</comment>
<comment type="PTM">
    <text evidence="1">Contains 7 disulfide bonds.</text>
</comment>
<comment type="mass spectrometry"/>
<comment type="similarity">
    <text evidence="4">Belongs to the phospholipase A2 family. Group II subfamily.</text>
</comment>
<name>PA2B_PROTO</name>
<feature type="chain" id="PRO_0000418562" description="Basic phospholipase A2 Pto-N6">
    <location>
        <begin position="1"/>
        <end position="23" status="greater than"/>
    </location>
</feature>
<feature type="non-terminal residue">
    <location>
        <position position="23"/>
    </location>
</feature>
<reference key="1">
    <citation type="journal article" date="2004" name="Biochem. J.">
        <title>Molecular evolution and structure-function relationships of crotoxin-like and asparagine-6-containing phospholipases A2 in pit viper venoms.</title>
        <authorList>
            <person name="Chen Y.-H."/>
            <person name="Wang Y.-M."/>
            <person name="Hseu M.-J."/>
            <person name="Tsai I.-H."/>
        </authorList>
    </citation>
    <scope>PROTEIN SEQUENCE</scope>
    <scope>MASS SPECTROMETRY</scope>
    <scope>SUBCELLULAR LOCATION</scope>
    <source>
        <tissue>Venom</tissue>
    </source>
</reference>
<sequence>NLLQFNKMIKIMTKKNAIPFYSS</sequence>
<evidence type="ECO:0000250" key="1"/>
<evidence type="ECO:0000269" key="2">
    <source>
    </source>
</evidence>
<evidence type="ECO:0000303" key="3">
    <source>
    </source>
</evidence>
<evidence type="ECO:0000305" key="4"/>
<evidence type="ECO:0000305" key="5">
    <source>
    </source>
</evidence>
<organism>
    <name type="scientific">Protobothrops tokarensis</name>
    <name type="common">Tokara habu</name>
    <name type="synonym">Trimeresurus tokarensis</name>
    <dbReference type="NCBI Taxonomy" id="61225"/>
    <lineage>
        <taxon>Eukaryota</taxon>
        <taxon>Metazoa</taxon>
        <taxon>Chordata</taxon>
        <taxon>Craniata</taxon>
        <taxon>Vertebrata</taxon>
        <taxon>Euteleostomi</taxon>
        <taxon>Lepidosauria</taxon>
        <taxon>Squamata</taxon>
        <taxon>Bifurcata</taxon>
        <taxon>Unidentata</taxon>
        <taxon>Episquamata</taxon>
        <taxon>Toxicofera</taxon>
        <taxon>Serpentes</taxon>
        <taxon>Colubroidea</taxon>
        <taxon>Viperidae</taxon>
        <taxon>Crotalinae</taxon>
        <taxon>Protobothrops</taxon>
    </lineage>
</organism>
<proteinExistence type="evidence at protein level"/>
<keyword id="KW-0106">Calcium</keyword>
<keyword id="KW-0903">Direct protein sequencing</keyword>
<keyword id="KW-1015">Disulfide bond</keyword>
<keyword id="KW-0378">Hydrolase</keyword>
<keyword id="KW-0442">Lipid degradation</keyword>
<keyword id="KW-0443">Lipid metabolism</keyword>
<keyword id="KW-0479">Metal-binding</keyword>
<keyword id="KW-0959">Myotoxin</keyword>
<keyword id="KW-0528">Neurotoxin</keyword>
<keyword id="KW-0638">Presynaptic neurotoxin</keyword>
<keyword id="KW-0964">Secreted</keyword>
<keyword id="KW-0800">Toxin</keyword>
<dbReference type="EC" id="3.1.1.4"/>
<dbReference type="GO" id="GO:0005576">
    <property type="term" value="C:extracellular region"/>
    <property type="evidence" value="ECO:0007669"/>
    <property type="project" value="UniProtKB-SubCell"/>
</dbReference>
<dbReference type="GO" id="GO:0046872">
    <property type="term" value="F:metal ion binding"/>
    <property type="evidence" value="ECO:0007669"/>
    <property type="project" value="UniProtKB-KW"/>
</dbReference>
<dbReference type="GO" id="GO:0004623">
    <property type="term" value="F:phospholipase A2 activity"/>
    <property type="evidence" value="ECO:0007669"/>
    <property type="project" value="UniProtKB-EC"/>
</dbReference>
<dbReference type="GO" id="GO:0090729">
    <property type="term" value="F:toxin activity"/>
    <property type="evidence" value="ECO:0007669"/>
    <property type="project" value="UniProtKB-KW"/>
</dbReference>
<dbReference type="GO" id="GO:0016042">
    <property type="term" value="P:lipid catabolic process"/>
    <property type="evidence" value="ECO:0007669"/>
    <property type="project" value="UniProtKB-KW"/>
</dbReference>
<accession>P0DJM7</accession>